<accession>Q9C8D4</accession>
<accession>Q84P19</accession>
<organism>
    <name type="scientific">Arabidopsis thaliana</name>
    <name type="common">Mouse-ear cress</name>
    <dbReference type="NCBI Taxonomy" id="3702"/>
    <lineage>
        <taxon>Eukaryota</taxon>
        <taxon>Viridiplantae</taxon>
        <taxon>Streptophyta</taxon>
        <taxon>Embryophyta</taxon>
        <taxon>Tracheophyta</taxon>
        <taxon>Spermatophyta</taxon>
        <taxon>Magnoliopsida</taxon>
        <taxon>eudicotyledons</taxon>
        <taxon>Gunneridae</taxon>
        <taxon>Pentapetalae</taxon>
        <taxon>rosids</taxon>
        <taxon>malvids</taxon>
        <taxon>Brassicales</taxon>
        <taxon>Brassicaceae</taxon>
        <taxon>Camelineae</taxon>
        <taxon>Arabidopsis</taxon>
    </lineage>
</organism>
<evidence type="ECO:0000255" key="1"/>
<evidence type="ECO:0000269" key="2">
    <source>
    </source>
</evidence>
<evidence type="ECO:0000305" key="3"/>
<gene>
    <name type="primary">AAE11</name>
    <name type="ordered locus">At1g66120</name>
    <name type="ORF">F15E12.22</name>
</gene>
<reference key="1">
    <citation type="journal article" date="2003" name="Plant Physiol.">
        <title>Arabidopsis contains a large superfamily of acyl-activating enzymes. Phylogenetic and biochemical analysis reveals a new class of acyl-coenzyme a synthetases.</title>
        <authorList>
            <person name="Shockey J.M."/>
            <person name="Fulda M.S."/>
            <person name="Browse J."/>
        </authorList>
    </citation>
    <scope>NUCLEOTIDE SEQUENCE [MRNA]</scope>
    <scope>FUNCTION</scope>
    <scope>CATALYTIC ACTIVITY</scope>
    <scope>TISSUE SPECIFICITY</scope>
    <scope>GENE FAMILY</scope>
    <scope>NOMENCLATURE</scope>
    <source>
        <strain>cv. Wassilewskija</strain>
    </source>
</reference>
<reference key="2">
    <citation type="journal article" date="2000" name="Nature">
        <title>Sequence and analysis of chromosome 1 of the plant Arabidopsis thaliana.</title>
        <authorList>
            <person name="Theologis A."/>
            <person name="Ecker J.R."/>
            <person name="Palm C.J."/>
            <person name="Federspiel N.A."/>
            <person name="Kaul S."/>
            <person name="White O."/>
            <person name="Alonso J."/>
            <person name="Altafi H."/>
            <person name="Araujo R."/>
            <person name="Bowman C.L."/>
            <person name="Brooks S.Y."/>
            <person name="Buehler E."/>
            <person name="Chan A."/>
            <person name="Chao Q."/>
            <person name="Chen H."/>
            <person name="Cheuk R.F."/>
            <person name="Chin C.W."/>
            <person name="Chung M.K."/>
            <person name="Conn L."/>
            <person name="Conway A.B."/>
            <person name="Conway A.R."/>
            <person name="Creasy T.H."/>
            <person name="Dewar K."/>
            <person name="Dunn P."/>
            <person name="Etgu P."/>
            <person name="Feldblyum T.V."/>
            <person name="Feng J.-D."/>
            <person name="Fong B."/>
            <person name="Fujii C.Y."/>
            <person name="Gill J.E."/>
            <person name="Goldsmith A.D."/>
            <person name="Haas B."/>
            <person name="Hansen N.F."/>
            <person name="Hughes B."/>
            <person name="Huizar L."/>
            <person name="Hunter J.L."/>
            <person name="Jenkins J."/>
            <person name="Johnson-Hopson C."/>
            <person name="Khan S."/>
            <person name="Khaykin E."/>
            <person name="Kim C.J."/>
            <person name="Koo H.L."/>
            <person name="Kremenetskaia I."/>
            <person name="Kurtz D.B."/>
            <person name="Kwan A."/>
            <person name="Lam B."/>
            <person name="Langin-Hooper S."/>
            <person name="Lee A."/>
            <person name="Lee J.M."/>
            <person name="Lenz C.A."/>
            <person name="Li J.H."/>
            <person name="Li Y.-P."/>
            <person name="Lin X."/>
            <person name="Liu S.X."/>
            <person name="Liu Z.A."/>
            <person name="Luros J.S."/>
            <person name="Maiti R."/>
            <person name="Marziali A."/>
            <person name="Militscher J."/>
            <person name="Miranda M."/>
            <person name="Nguyen M."/>
            <person name="Nierman W.C."/>
            <person name="Osborne B.I."/>
            <person name="Pai G."/>
            <person name="Peterson J."/>
            <person name="Pham P.K."/>
            <person name="Rizzo M."/>
            <person name="Rooney T."/>
            <person name="Rowley D."/>
            <person name="Sakano H."/>
            <person name="Salzberg S.L."/>
            <person name="Schwartz J.R."/>
            <person name="Shinn P."/>
            <person name="Southwick A.M."/>
            <person name="Sun H."/>
            <person name="Tallon L.J."/>
            <person name="Tambunga G."/>
            <person name="Toriumi M.J."/>
            <person name="Town C.D."/>
            <person name="Utterback T."/>
            <person name="Van Aken S."/>
            <person name="Vaysberg M."/>
            <person name="Vysotskaia V.S."/>
            <person name="Walker M."/>
            <person name="Wu D."/>
            <person name="Yu G."/>
            <person name="Fraser C.M."/>
            <person name="Venter J.C."/>
            <person name="Davis R.W."/>
        </authorList>
    </citation>
    <scope>NUCLEOTIDE SEQUENCE [LARGE SCALE GENOMIC DNA]</scope>
    <source>
        <strain>cv. Columbia</strain>
    </source>
</reference>
<reference key="3">
    <citation type="journal article" date="2017" name="Plant J.">
        <title>Araport11: a complete reannotation of the Arabidopsis thaliana reference genome.</title>
        <authorList>
            <person name="Cheng C.Y."/>
            <person name="Krishnakumar V."/>
            <person name="Chan A.P."/>
            <person name="Thibaud-Nissen F."/>
            <person name="Schobel S."/>
            <person name="Town C.D."/>
        </authorList>
    </citation>
    <scope>GENOME REANNOTATION</scope>
    <source>
        <strain>cv. Columbia</strain>
    </source>
</reference>
<reference key="4">
    <citation type="journal article" date="2003" name="Science">
        <title>Empirical analysis of transcriptional activity in the Arabidopsis genome.</title>
        <authorList>
            <person name="Yamada K."/>
            <person name="Lim J."/>
            <person name="Dale J.M."/>
            <person name="Chen H."/>
            <person name="Shinn P."/>
            <person name="Palm C.J."/>
            <person name="Southwick A.M."/>
            <person name="Wu H.C."/>
            <person name="Kim C.J."/>
            <person name="Nguyen M."/>
            <person name="Pham P.K."/>
            <person name="Cheuk R.F."/>
            <person name="Karlin-Newmann G."/>
            <person name="Liu S.X."/>
            <person name="Lam B."/>
            <person name="Sakano H."/>
            <person name="Wu T."/>
            <person name="Yu G."/>
            <person name="Miranda M."/>
            <person name="Quach H.L."/>
            <person name="Tripp M."/>
            <person name="Chang C.H."/>
            <person name="Lee J.M."/>
            <person name="Toriumi M.J."/>
            <person name="Chan M.M."/>
            <person name="Tang C.C."/>
            <person name="Onodera C.S."/>
            <person name="Deng J.M."/>
            <person name="Akiyama K."/>
            <person name="Ansari Y."/>
            <person name="Arakawa T."/>
            <person name="Banh J."/>
            <person name="Banno F."/>
            <person name="Bowser L."/>
            <person name="Brooks S.Y."/>
            <person name="Carninci P."/>
            <person name="Chao Q."/>
            <person name="Choy N."/>
            <person name="Enju A."/>
            <person name="Goldsmith A.D."/>
            <person name="Gurjal M."/>
            <person name="Hansen N.F."/>
            <person name="Hayashizaki Y."/>
            <person name="Johnson-Hopson C."/>
            <person name="Hsuan V.W."/>
            <person name="Iida K."/>
            <person name="Karnes M."/>
            <person name="Khan S."/>
            <person name="Koesema E."/>
            <person name="Ishida J."/>
            <person name="Jiang P.X."/>
            <person name="Jones T."/>
            <person name="Kawai J."/>
            <person name="Kamiya A."/>
            <person name="Meyers C."/>
            <person name="Nakajima M."/>
            <person name="Narusaka M."/>
            <person name="Seki M."/>
            <person name="Sakurai T."/>
            <person name="Satou M."/>
            <person name="Tamse R."/>
            <person name="Vaysberg M."/>
            <person name="Wallender E.K."/>
            <person name="Wong C."/>
            <person name="Yamamura Y."/>
            <person name="Yuan S."/>
            <person name="Shinozaki K."/>
            <person name="Davis R.W."/>
            <person name="Theologis A."/>
            <person name="Ecker J.R."/>
        </authorList>
    </citation>
    <scope>NUCLEOTIDE SEQUENCE [LARGE SCALE MRNA]</scope>
    <source>
        <strain>cv. Columbia</strain>
    </source>
</reference>
<reference key="5">
    <citation type="submission" date="2007-03" db="EMBL/GenBank/DDBJ databases">
        <title>Arabidopsis ORF clones.</title>
        <authorList>
            <person name="Bautista V.R."/>
            <person name="Kim C.J."/>
            <person name="Chen H."/>
            <person name="Wu S.Y."/>
            <person name="De Los Reyes C."/>
            <person name="Ecker J.R."/>
        </authorList>
    </citation>
    <scope>NUCLEOTIDE SEQUENCE [LARGE SCALE MRNA]</scope>
    <source>
        <strain>cv. Columbia</strain>
    </source>
</reference>
<comment type="function">
    <text evidence="2">Butyrate--CoA ligase that is active in vitro with medium-chain fatty acids, with a preference for hexanoate and octanoate.</text>
</comment>
<comment type="catalytic activity">
    <reaction evidence="2">
        <text>a medium-chain fatty acid + ATP + CoA = a medium-chain fatty acyl-CoA + AMP + diphosphate</text>
        <dbReference type="Rhea" id="RHEA:48340"/>
        <dbReference type="ChEBI" id="CHEBI:30616"/>
        <dbReference type="ChEBI" id="CHEBI:33019"/>
        <dbReference type="ChEBI" id="CHEBI:57287"/>
        <dbReference type="ChEBI" id="CHEBI:59558"/>
        <dbReference type="ChEBI" id="CHEBI:90546"/>
        <dbReference type="ChEBI" id="CHEBI:456215"/>
        <dbReference type="EC" id="6.2.1.2"/>
    </reaction>
</comment>
<comment type="subcellular location">
    <subcellularLocation>
        <location evidence="3">Peroxisome</location>
    </subcellularLocation>
</comment>
<comment type="tissue specificity">
    <text evidence="2">Expressed in flowers.</text>
</comment>
<comment type="similarity">
    <text evidence="3">Belongs to the ATP-dependent AMP-binding enzyme family.</text>
</comment>
<feature type="chain" id="PRO_0000415722" description="Butyrate--CoA ligase AAE11, peroxisomal">
    <location>
        <begin position="1"/>
        <end position="572"/>
    </location>
</feature>
<feature type="short sequence motif" description="Microbody targeting signal" evidence="1">
    <location>
        <begin position="570"/>
        <end position="572"/>
    </location>
</feature>
<feature type="sequence conflict" description="In Ref. 1; AAP03024." evidence="3" ref="1">
    <original>YQSQP</original>
    <variation>DQSQA</variation>
    <location>
        <begin position="135"/>
        <end position="139"/>
    </location>
</feature>
<feature type="sequence conflict" description="In Ref. 1; AAP03024." evidence="3" ref="1">
    <original>Q</original>
    <variation>R</variation>
    <location>
        <position position="209"/>
    </location>
</feature>
<feature type="sequence conflict" description="In Ref. 1; AAP03024." evidence="3" ref="1">
    <original>I</original>
    <variation>M</variation>
    <location>
        <position position="358"/>
    </location>
</feature>
<feature type="sequence conflict" description="In Ref. 1; AAP03024." evidence="3" ref="1">
    <original>E</original>
    <variation>Q</variation>
    <location>
        <position position="467"/>
    </location>
</feature>
<feature type="sequence conflict" description="In Ref. 1; AAP03024." evidence="3" ref="1">
    <original>EEGL</original>
    <variation>DEES</variation>
    <location>
        <begin position="495"/>
        <end position="498"/>
    </location>
</feature>
<sequence>MDNLVLCEANNVPLTPITFLKRASECYPNRTSIIYGQTRFTWPQTYDRCCRLAASLLSLNITRNDVVSILAPNVPAMYEMHFSVPMTGAVLNPINTRLDAKTIAIILRHAEPKILFVDYEFAPLIQEVLRLIPTYQSQPHPRIILINEIDSTTKPFSKELDYEGLIRKGEPTPSSSASMFRVHNEHDPISLNYTSGTTADPKGVVISHQGAYLSALSSIIGWEMGIFPVYLWTLPMFHCNGWTHTWSVAARGGTNVCIRHVTAPEIYKNIELHGVTHMSCVPTVFRFLLEGSRTDQSPKSSPVQVLTGGSSPPAVLIKKVEQLGFHVMHGYGLTEATGPVLFCEWQDEWNKLPEHQQIELQQRQGVRNLTLADVDVKNTKTLESVPRDGKTMGEIVIKGSSLMKGYLKNPKATSEAFKHGWLNTGDIGVIHPDGYVEIKDRSKDIIISGGENISSIEVEKVLYMYQEVLEAAVVAMPHPLWGETPCAFVVLKKGEEGLVTSEGDLIKYCRENMPHFMCPKKVVFFQELPKNSNGKILKSKLRDIAKALVVREDDAGSKKVHQRSIEHVSSRL</sequence>
<proteinExistence type="evidence at protein level"/>
<dbReference type="EC" id="6.2.1.2"/>
<dbReference type="EMBL" id="AY250841">
    <property type="protein sequence ID" value="AAP03024.1"/>
    <property type="molecule type" value="mRNA"/>
</dbReference>
<dbReference type="EMBL" id="AC026480">
    <property type="protein sequence ID" value="AAG51304.1"/>
    <property type="molecule type" value="Genomic_DNA"/>
</dbReference>
<dbReference type="EMBL" id="CP002684">
    <property type="protein sequence ID" value="AEE34464.1"/>
    <property type="molecule type" value="Genomic_DNA"/>
</dbReference>
<dbReference type="EMBL" id="BT004314">
    <property type="protein sequence ID" value="AAO42311.1"/>
    <property type="molecule type" value="mRNA"/>
</dbReference>
<dbReference type="EMBL" id="BT030349">
    <property type="protein sequence ID" value="ABO38762.1"/>
    <property type="molecule type" value="mRNA"/>
</dbReference>
<dbReference type="PIR" id="H96685">
    <property type="entry name" value="H96685"/>
</dbReference>
<dbReference type="RefSeq" id="NP_176786.1">
    <property type="nucleotide sequence ID" value="NM_105283.3"/>
</dbReference>
<dbReference type="SMR" id="Q9C8D4"/>
<dbReference type="BioGRID" id="28147">
    <property type="interactions" value="1"/>
</dbReference>
<dbReference type="FunCoup" id="Q9C8D4">
    <property type="interactions" value="138"/>
</dbReference>
<dbReference type="STRING" id="3702.Q9C8D4"/>
<dbReference type="GlyGen" id="Q9C8D4">
    <property type="glycosylation" value="1 site"/>
</dbReference>
<dbReference type="PaxDb" id="3702-AT1G66120.1"/>
<dbReference type="ProteomicsDB" id="244558"/>
<dbReference type="EnsemblPlants" id="AT1G66120.1">
    <property type="protein sequence ID" value="AT1G66120.1"/>
    <property type="gene ID" value="AT1G66120"/>
</dbReference>
<dbReference type="GeneID" id="842926"/>
<dbReference type="Gramene" id="AT1G66120.1">
    <property type="protein sequence ID" value="AT1G66120.1"/>
    <property type="gene ID" value="AT1G66120"/>
</dbReference>
<dbReference type="KEGG" id="ath:AT1G66120"/>
<dbReference type="Araport" id="AT1G66120"/>
<dbReference type="TAIR" id="AT1G66120">
    <property type="gene designation" value="AAE11"/>
</dbReference>
<dbReference type="eggNOG" id="KOG1176">
    <property type="taxonomic scope" value="Eukaryota"/>
</dbReference>
<dbReference type="HOGENOM" id="CLU_000022_59_5_1"/>
<dbReference type="InParanoid" id="Q9C8D4"/>
<dbReference type="OMA" id="KWQIPDR"/>
<dbReference type="PhylomeDB" id="Q9C8D4"/>
<dbReference type="BioCyc" id="ARA:AT1G66120-MONOMER"/>
<dbReference type="PRO" id="PR:Q9C8D4"/>
<dbReference type="Proteomes" id="UP000006548">
    <property type="component" value="Chromosome 1"/>
</dbReference>
<dbReference type="ExpressionAtlas" id="Q9C8D4">
    <property type="expression patterns" value="baseline and differential"/>
</dbReference>
<dbReference type="GO" id="GO:0005777">
    <property type="term" value="C:peroxisome"/>
    <property type="evidence" value="ECO:0007669"/>
    <property type="project" value="UniProtKB-SubCell"/>
</dbReference>
<dbReference type="GO" id="GO:0031956">
    <property type="term" value="F:medium-chain fatty acid-CoA ligase activity"/>
    <property type="evidence" value="ECO:0000314"/>
    <property type="project" value="UniProtKB"/>
</dbReference>
<dbReference type="GO" id="GO:0019605">
    <property type="term" value="P:butyrate metabolic process"/>
    <property type="evidence" value="ECO:0000314"/>
    <property type="project" value="UniProtKB"/>
</dbReference>
<dbReference type="CDD" id="cd12118">
    <property type="entry name" value="ttLC_FACS_AEE21_like"/>
    <property type="match status" value="1"/>
</dbReference>
<dbReference type="FunFam" id="3.30.300.30:FF:000008">
    <property type="entry name" value="2,3-dihydroxybenzoate-AMP ligase"/>
    <property type="match status" value="1"/>
</dbReference>
<dbReference type="FunFam" id="3.40.50.12780:FF:000003">
    <property type="entry name" value="Long-chain-fatty-acid--CoA ligase FadD"/>
    <property type="match status" value="1"/>
</dbReference>
<dbReference type="Gene3D" id="3.30.300.30">
    <property type="match status" value="1"/>
</dbReference>
<dbReference type="Gene3D" id="3.40.50.12780">
    <property type="entry name" value="N-terminal domain of ligase-like"/>
    <property type="match status" value="1"/>
</dbReference>
<dbReference type="InterPro" id="IPR025110">
    <property type="entry name" value="AMP-bd_C"/>
</dbReference>
<dbReference type="InterPro" id="IPR045851">
    <property type="entry name" value="AMP-bd_C_sf"/>
</dbReference>
<dbReference type="InterPro" id="IPR000873">
    <property type="entry name" value="AMP-dep_synth/lig_dom"/>
</dbReference>
<dbReference type="InterPro" id="IPR042099">
    <property type="entry name" value="ANL_N_sf"/>
</dbReference>
<dbReference type="NCBIfam" id="NF006020">
    <property type="entry name" value="PRK08162.1"/>
    <property type="match status" value="1"/>
</dbReference>
<dbReference type="PANTHER" id="PTHR43859">
    <property type="entry name" value="ACYL-ACTIVATING ENZYME"/>
    <property type="match status" value="1"/>
</dbReference>
<dbReference type="PANTHER" id="PTHR43859:SF2">
    <property type="entry name" value="BUTYRATE--COA LIGASE AAE11, PEROXISOMAL"/>
    <property type="match status" value="1"/>
</dbReference>
<dbReference type="Pfam" id="PF00501">
    <property type="entry name" value="AMP-binding"/>
    <property type="match status" value="1"/>
</dbReference>
<dbReference type="Pfam" id="PF13193">
    <property type="entry name" value="AMP-binding_C"/>
    <property type="match status" value="1"/>
</dbReference>
<dbReference type="SUPFAM" id="SSF56801">
    <property type="entry name" value="Acetyl-CoA synthetase-like"/>
    <property type="match status" value="1"/>
</dbReference>
<keyword id="KW-0276">Fatty acid metabolism</keyword>
<keyword id="KW-0436">Ligase</keyword>
<keyword id="KW-0443">Lipid metabolism</keyword>
<keyword id="KW-0576">Peroxisome</keyword>
<keyword id="KW-1185">Reference proteome</keyword>
<name>AAE11_ARATH</name>
<protein>
    <recommendedName>
        <fullName>Butyrate--CoA ligase AAE11, peroxisomal</fullName>
        <ecNumber>6.2.1.2</ecNumber>
    </recommendedName>
    <alternativeName>
        <fullName>Acyl-activating enzyme 11</fullName>
    </alternativeName>
    <alternativeName>
        <fullName>Butyryl-CoA synthetase</fullName>
    </alternativeName>
</protein>